<feature type="chain" id="PRO_0000101426" description="Uncharacterized protein in cobV 5'region">
    <location>
        <begin position="1"/>
        <end position="233"/>
    </location>
</feature>
<feature type="transmembrane region" description="Helical" evidence="1">
    <location>
        <begin position="4"/>
        <end position="24"/>
    </location>
</feature>
<feature type="transmembrane region" description="Helical" evidence="1">
    <location>
        <begin position="35"/>
        <end position="55"/>
    </location>
</feature>
<feature type="transmembrane region" description="Helical" evidence="1">
    <location>
        <begin position="66"/>
        <end position="86"/>
    </location>
</feature>
<sequence length="233" mass="25164">MTRLAILLSILAIGLILLIINHDTGRTMGLANDQFGQLVSLGAIATLIGAGILQSRHRFGEGLRQIAIWLFVVLALVSAYVYRFELEGFGNRLLAGLIPGRATIITDSEGQQEVVLQKMLNGHFETTATVDGKDISMLVDTGASNIALTYEDAEKIGLDPANLNFIVTVMTANGRAQAAPVMLQEISIGPITRRNIGATVAAKGKLDQSLLGMSFLSTLEMLQMRTDELRLRD</sequence>
<accession>P29938</accession>
<reference key="1">
    <citation type="journal article" date="1991" name="J. Bacteriol.">
        <title>Genetic analysis, nucleotide sequence, and products of two Pseudomonas denitrificans cob genes encoding nicotinate-nucleotide: dimethylbenzimidazole phosphoribosyltransferase and cobalamin (5'-phosphate) synthase.</title>
        <authorList>
            <person name="Cameron B."/>
            <person name="Blanche F."/>
            <person name="Rouyez M.-C."/>
            <person name="Bisch D."/>
            <person name="Famechon A."/>
            <person name="Couder M."/>
            <person name="Cauchois L."/>
            <person name="Thibaut D."/>
            <person name="Debussche L."/>
            <person name="Crouzet J."/>
        </authorList>
    </citation>
    <scope>NUCLEOTIDE SEQUENCE [GENOMIC DNA]</scope>
    <source>
        <strain>SC510</strain>
    </source>
</reference>
<organism>
    <name type="scientific">Sinorhizobium sp</name>
    <dbReference type="NCBI Taxonomy" id="42445"/>
    <lineage>
        <taxon>Bacteria</taxon>
        <taxon>Pseudomonadati</taxon>
        <taxon>Pseudomonadota</taxon>
        <taxon>Alphaproteobacteria</taxon>
        <taxon>Hyphomicrobiales</taxon>
        <taxon>Rhizobiaceae</taxon>
        <taxon>Sinorhizobium/Ensifer group</taxon>
        <taxon>Sinorhizobium</taxon>
    </lineage>
</organism>
<proteinExistence type="predicted"/>
<evidence type="ECO:0000255" key="1"/>
<evidence type="ECO:0000305" key="2"/>
<keyword id="KW-1003">Cell membrane</keyword>
<keyword id="KW-0472">Membrane</keyword>
<keyword id="KW-0812">Transmembrane</keyword>
<keyword id="KW-1133">Transmembrane helix</keyword>
<comment type="subcellular location">
    <subcellularLocation>
        <location evidence="2">Cell membrane</location>
        <topology evidence="2">Multi-pass membrane protein</topology>
    </subcellularLocation>
</comment>
<comment type="caution">
    <text evidence="2">Was originally thought to originate from Pseudomonas denitrificans, but similarity searches show that the sequence is much closer to Sinorhizobium. The entry's taxonomy has been changed.</text>
</comment>
<dbReference type="EMBL" id="M62868">
    <property type="protein sequence ID" value="AAA25786.1"/>
    <property type="molecule type" value="Genomic_DNA"/>
</dbReference>
<dbReference type="SMR" id="P29938"/>
<dbReference type="GO" id="GO:0005886">
    <property type="term" value="C:plasma membrane"/>
    <property type="evidence" value="ECO:0007669"/>
    <property type="project" value="UniProtKB-SubCell"/>
</dbReference>
<dbReference type="GO" id="GO:0004190">
    <property type="term" value="F:aspartic-type endopeptidase activity"/>
    <property type="evidence" value="ECO:0007669"/>
    <property type="project" value="InterPro"/>
</dbReference>
<dbReference type="GO" id="GO:0006508">
    <property type="term" value="P:proteolysis"/>
    <property type="evidence" value="ECO:0007669"/>
    <property type="project" value="InterPro"/>
</dbReference>
<dbReference type="CDD" id="cd05483">
    <property type="entry name" value="retropepsin_like_bacteria"/>
    <property type="match status" value="1"/>
</dbReference>
<dbReference type="Gene3D" id="2.40.70.10">
    <property type="entry name" value="Acid Proteases"/>
    <property type="match status" value="1"/>
</dbReference>
<dbReference type="InterPro" id="IPR001969">
    <property type="entry name" value="Aspartic_peptidase_AS"/>
</dbReference>
<dbReference type="InterPro" id="IPR011969">
    <property type="entry name" value="Clan_AA_Asp_peptidase_C"/>
</dbReference>
<dbReference type="InterPro" id="IPR021109">
    <property type="entry name" value="Peptidase_aspartic_dom_sf"/>
</dbReference>
<dbReference type="InterPro" id="IPR034122">
    <property type="entry name" value="Retropepsin-like_bacterial"/>
</dbReference>
<dbReference type="NCBIfam" id="TIGR02281">
    <property type="entry name" value="clan_AA_DTGA"/>
    <property type="match status" value="1"/>
</dbReference>
<dbReference type="Pfam" id="PF13975">
    <property type="entry name" value="gag-asp_proteas"/>
    <property type="match status" value="1"/>
</dbReference>
<dbReference type="SUPFAM" id="SSF50630">
    <property type="entry name" value="Acid proteases"/>
    <property type="match status" value="1"/>
</dbReference>
<name>YCBV_SINSX</name>
<protein>
    <recommendedName>
        <fullName>Uncharacterized protein in cobV 5'region</fullName>
    </recommendedName>
    <alternativeName>
        <fullName>ORF1</fullName>
    </alternativeName>
</protein>